<evidence type="ECO:0000255" key="1">
    <source>
        <dbReference type="HAMAP-Rule" id="MF_00379"/>
    </source>
</evidence>
<dbReference type="EC" id="3.6.-.-" evidence="1"/>
<dbReference type="EMBL" id="CP000529">
    <property type="protein sequence ID" value="ABM39402.1"/>
    <property type="molecule type" value="Genomic_DNA"/>
</dbReference>
<dbReference type="RefSeq" id="WP_011803464.1">
    <property type="nucleotide sequence ID" value="NC_008781.1"/>
</dbReference>
<dbReference type="SMR" id="A1VUS4"/>
<dbReference type="STRING" id="365044.Pnap_4112"/>
<dbReference type="KEGG" id="pna:Pnap_4112"/>
<dbReference type="eggNOG" id="COG0486">
    <property type="taxonomic scope" value="Bacteria"/>
</dbReference>
<dbReference type="HOGENOM" id="CLU_019624_4_1_4"/>
<dbReference type="OrthoDB" id="9805918at2"/>
<dbReference type="Proteomes" id="UP000000644">
    <property type="component" value="Chromosome"/>
</dbReference>
<dbReference type="GO" id="GO:0005829">
    <property type="term" value="C:cytosol"/>
    <property type="evidence" value="ECO:0007669"/>
    <property type="project" value="TreeGrafter"/>
</dbReference>
<dbReference type="GO" id="GO:0005525">
    <property type="term" value="F:GTP binding"/>
    <property type="evidence" value="ECO:0007669"/>
    <property type="project" value="UniProtKB-UniRule"/>
</dbReference>
<dbReference type="GO" id="GO:0003924">
    <property type="term" value="F:GTPase activity"/>
    <property type="evidence" value="ECO:0007669"/>
    <property type="project" value="UniProtKB-UniRule"/>
</dbReference>
<dbReference type="GO" id="GO:0046872">
    <property type="term" value="F:metal ion binding"/>
    <property type="evidence" value="ECO:0007669"/>
    <property type="project" value="UniProtKB-KW"/>
</dbReference>
<dbReference type="GO" id="GO:0030488">
    <property type="term" value="P:tRNA methylation"/>
    <property type="evidence" value="ECO:0007669"/>
    <property type="project" value="TreeGrafter"/>
</dbReference>
<dbReference type="GO" id="GO:0002098">
    <property type="term" value="P:tRNA wobble uridine modification"/>
    <property type="evidence" value="ECO:0007669"/>
    <property type="project" value="TreeGrafter"/>
</dbReference>
<dbReference type="CDD" id="cd04164">
    <property type="entry name" value="trmE"/>
    <property type="match status" value="1"/>
</dbReference>
<dbReference type="CDD" id="cd14858">
    <property type="entry name" value="TrmE_N"/>
    <property type="match status" value="1"/>
</dbReference>
<dbReference type="Gene3D" id="3.40.50.300">
    <property type="entry name" value="P-loop containing nucleotide triphosphate hydrolases"/>
    <property type="match status" value="1"/>
</dbReference>
<dbReference type="Gene3D" id="3.30.1360.120">
    <property type="entry name" value="Probable tRNA modification gtpase trme, domain 1"/>
    <property type="match status" value="1"/>
</dbReference>
<dbReference type="Gene3D" id="1.20.120.430">
    <property type="entry name" value="tRNA modification GTPase MnmE domain 2"/>
    <property type="match status" value="1"/>
</dbReference>
<dbReference type="HAMAP" id="MF_00379">
    <property type="entry name" value="GTPase_MnmE"/>
    <property type="match status" value="1"/>
</dbReference>
<dbReference type="InterPro" id="IPR031168">
    <property type="entry name" value="G_TrmE"/>
</dbReference>
<dbReference type="InterPro" id="IPR006073">
    <property type="entry name" value="GTP-bd"/>
</dbReference>
<dbReference type="InterPro" id="IPR018948">
    <property type="entry name" value="GTP-bd_TrmE_N"/>
</dbReference>
<dbReference type="InterPro" id="IPR004520">
    <property type="entry name" value="GTPase_MnmE"/>
</dbReference>
<dbReference type="InterPro" id="IPR027368">
    <property type="entry name" value="MnmE_dom2"/>
</dbReference>
<dbReference type="InterPro" id="IPR025867">
    <property type="entry name" value="MnmE_helical"/>
</dbReference>
<dbReference type="InterPro" id="IPR027417">
    <property type="entry name" value="P-loop_NTPase"/>
</dbReference>
<dbReference type="InterPro" id="IPR005225">
    <property type="entry name" value="Small_GTP-bd"/>
</dbReference>
<dbReference type="InterPro" id="IPR027266">
    <property type="entry name" value="TrmE/GcvT_dom1"/>
</dbReference>
<dbReference type="NCBIfam" id="TIGR00450">
    <property type="entry name" value="mnmE_trmE_thdF"/>
    <property type="match status" value="1"/>
</dbReference>
<dbReference type="NCBIfam" id="NF003661">
    <property type="entry name" value="PRK05291.1-3"/>
    <property type="match status" value="1"/>
</dbReference>
<dbReference type="NCBIfam" id="TIGR00231">
    <property type="entry name" value="small_GTP"/>
    <property type="match status" value="1"/>
</dbReference>
<dbReference type="PANTHER" id="PTHR42714">
    <property type="entry name" value="TRNA MODIFICATION GTPASE GTPBP3"/>
    <property type="match status" value="1"/>
</dbReference>
<dbReference type="PANTHER" id="PTHR42714:SF2">
    <property type="entry name" value="TRNA MODIFICATION GTPASE GTPBP3, MITOCHONDRIAL"/>
    <property type="match status" value="1"/>
</dbReference>
<dbReference type="Pfam" id="PF01926">
    <property type="entry name" value="MMR_HSR1"/>
    <property type="match status" value="1"/>
</dbReference>
<dbReference type="Pfam" id="PF12631">
    <property type="entry name" value="MnmE_helical"/>
    <property type="match status" value="1"/>
</dbReference>
<dbReference type="Pfam" id="PF10396">
    <property type="entry name" value="TrmE_N"/>
    <property type="match status" value="1"/>
</dbReference>
<dbReference type="SUPFAM" id="SSF52540">
    <property type="entry name" value="P-loop containing nucleoside triphosphate hydrolases"/>
    <property type="match status" value="1"/>
</dbReference>
<dbReference type="SUPFAM" id="SSF116878">
    <property type="entry name" value="TrmE connector domain"/>
    <property type="match status" value="1"/>
</dbReference>
<dbReference type="PROSITE" id="PS51709">
    <property type="entry name" value="G_TRME"/>
    <property type="match status" value="1"/>
</dbReference>
<proteinExistence type="inferred from homology"/>
<comment type="function">
    <text evidence="1">Exhibits a very high intrinsic GTPase hydrolysis rate. Involved in the addition of a carboxymethylaminomethyl (cmnm) group at the wobble position (U34) of certain tRNAs, forming tRNA-cmnm(5)s(2)U34.</text>
</comment>
<comment type="cofactor">
    <cofactor evidence="1">
        <name>K(+)</name>
        <dbReference type="ChEBI" id="CHEBI:29103"/>
    </cofactor>
    <text evidence="1">Binds 1 potassium ion per subunit.</text>
</comment>
<comment type="subunit">
    <text evidence="1">Homodimer. Heterotetramer of two MnmE and two MnmG subunits.</text>
</comment>
<comment type="subcellular location">
    <subcellularLocation>
        <location evidence="1">Cytoplasm</location>
    </subcellularLocation>
</comment>
<comment type="similarity">
    <text evidence="1">Belongs to the TRAFAC class TrmE-Era-EngA-EngB-Septin-like GTPase superfamily. TrmE GTPase family.</text>
</comment>
<accession>A1VUS4</accession>
<gene>
    <name evidence="1" type="primary">mnmE</name>
    <name evidence="1" type="synonym">trmE</name>
    <name type="ordered locus">Pnap_4112</name>
</gene>
<keyword id="KW-0963">Cytoplasm</keyword>
<keyword id="KW-0342">GTP-binding</keyword>
<keyword id="KW-0378">Hydrolase</keyword>
<keyword id="KW-0460">Magnesium</keyword>
<keyword id="KW-0479">Metal-binding</keyword>
<keyword id="KW-0547">Nucleotide-binding</keyword>
<keyword id="KW-0630">Potassium</keyword>
<keyword id="KW-1185">Reference proteome</keyword>
<keyword id="KW-0819">tRNA processing</keyword>
<organism>
    <name type="scientific">Polaromonas naphthalenivorans (strain CJ2)</name>
    <dbReference type="NCBI Taxonomy" id="365044"/>
    <lineage>
        <taxon>Bacteria</taxon>
        <taxon>Pseudomonadati</taxon>
        <taxon>Pseudomonadota</taxon>
        <taxon>Betaproteobacteria</taxon>
        <taxon>Burkholderiales</taxon>
        <taxon>Comamonadaceae</taxon>
        <taxon>Polaromonas</taxon>
    </lineage>
</organism>
<feature type="chain" id="PRO_0000345869" description="tRNA modification GTPase MnmE">
    <location>
        <begin position="1"/>
        <end position="478"/>
    </location>
</feature>
<feature type="domain" description="TrmE-type G">
    <location>
        <begin position="231"/>
        <end position="400"/>
    </location>
</feature>
<feature type="binding site" evidence="1">
    <location>
        <position position="25"/>
    </location>
    <ligand>
        <name>(6S)-5-formyl-5,6,7,8-tetrahydrofolate</name>
        <dbReference type="ChEBI" id="CHEBI:57457"/>
    </ligand>
</feature>
<feature type="binding site" evidence="1">
    <location>
        <position position="82"/>
    </location>
    <ligand>
        <name>(6S)-5-formyl-5,6,7,8-tetrahydrofolate</name>
        <dbReference type="ChEBI" id="CHEBI:57457"/>
    </ligand>
</feature>
<feature type="binding site" evidence="1">
    <location>
        <position position="135"/>
    </location>
    <ligand>
        <name>(6S)-5-formyl-5,6,7,8-tetrahydrofolate</name>
        <dbReference type="ChEBI" id="CHEBI:57457"/>
    </ligand>
</feature>
<feature type="binding site" evidence="1">
    <location>
        <begin position="241"/>
        <end position="246"/>
    </location>
    <ligand>
        <name>GTP</name>
        <dbReference type="ChEBI" id="CHEBI:37565"/>
    </ligand>
</feature>
<feature type="binding site" evidence="1">
    <location>
        <position position="241"/>
    </location>
    <ligand>
        <name>K(+)</name>
        <dbReference type="ChEBI" id="CHEBI:29103"/>
    </ligand>
</feature>
<feature type="binding site" evidence="1">
    <location>
        <position position="245"/>
    </location>
    <ligand>
        <name>Mg(2+)</name>
        <dbReference type="ChEBI" id="CHEBI:18420"/>
    </ligand>
</feature>
<feature type="binding site" evidence="1">
    <location>
        <begin position="260"/>
        <end position="266"/>
    </location>
    <ligand>
        <name>GTP</name>
        <dbReference type="ChEBI" id="CHEBI:37565"/>
    </ligand>
</feature>
<feature type="binding site" evidence="1">
    <location>
        <position position="260"/>
    </location>
    <ligand>
        <name>K(+)</name>
        <dbReference type="ChEBI" id="CHEBI:29103"/>
    </ligand>
</feature>
<feature type="binding site" evidence="1">
    <location>
        <position position="262"/>
    </location>
    <ligand>
        <name>K(+)</name>
        <dbReference type="ChEBI" id="CHEBI:29103"/>
    </ligand>
</feature>
<feature type="binding site" evidence="1">
    <location>
        <position position="265"/>
    </location>
    <ligand>
        <name>K(+)</name>
        <dbReference type="ChEBI" id="CHEBI:29103"/>
    </ligand>
</feature>
<feature type="binding site" evidence="1">
    <location>
        <position position="266"/>
    </location>
    <ligand>
        <name>Mg(2+)</name>
        <dbReference type="ChEBI" id="CHEBI:18420"/>
    </ligand>
</feature>
<feature type="binding site" evidence="1">
    <location>
        <begin position="285"/>
        <end position="288"/>
    </location>
    <ligand>
        <name>GTP</name>
        <dbReference type="ChEBI" id="CHEBI:37565"/>
    </ligand>
</feature>
<feature type="binding site" evidence="1">
    <location>
        <position position="478"/>
    </location>
    <ligand>
        <name>(6S)-5-formyl-5,6,7,8-tetrahydrofolate</name>
        <dbReference type="ChEBI" id="CHEBI:57457"/>
    </ligand>
</feature>
<name>MNME_POLNA</name>
<reference key="1">
    <citation type="journal article" date="2009" name="Environ. Microbiol.">
        <title>The genome of Polaromonas naphthalenivorans strain CJ2, isolated from coal tar-contaminated sediment, reveals physiological and metabolic versatility and evolution through extensive horizontal gene transfer.</title>
        <authorList>
            <person name="Yagi J.M."/>
            <person name="Sims D."/>
            <person name="Brettin T."/>
            <person name="Bruce D."/>
            <person name="Madsen E.L."/>
        </authorList>
    </citation>
    <scope>NUCLEOTIDE SEQUENCE [LARGE SCALE GENOMIC DNA]</scope>
    <source>
        <strain>CJ2</strain>
    </source>
</reference>
<protein>
    <recommendedName>
        <fullName evidence="1">tRNA modification GTPase MnmE</fullName>
        <ecNumber evidence="1">3.6.-.-</ecNumber>
    </recommendedName>
</protein>
<sequence>MLARHHHPIVAIATAPGRGGVGIVRLSGQRIAPVVQALCGRKLSPRQATYLPFRDAHGQIIDKGLAIFFPAPHSYTGEDVLELQAHGGPVVLQLLLARCLEAGAALDPATGQPVLAQLRVAEPGEFTERAFLNDKIDLAQAEAIADLIDASTETAARSAARSMSGEFSQAVNTLLEQLIHLRMLVEATLDFPEEDIDFLQQADAQGQLLRLQATLASVLARATQGAILREGIKVVIAGQPNVGKSSLLNALAGAELAIVTPVAGTTRDKVSQLIQIEGVPLHVVDTAGLREALDEVEKIGIQRAWTEIESADAVLFLHDLARHDATENPLYAINYIADDARLQSALALKLPKNTAIIDVWNKSDMAGPELLRQVNGGVLISAKTGAGLQALREQLLRVVGWQAAPEGVFMARERHVSALRSVQIQLLTAQNQLQAAVPALDLLAEDLRQAQLHLSSITGAFNADDLLGEIFSKFCIGK</sequence>